<name>MMS22_DANRE</name>
<reference key="1">
    <citation type="submission" date="2008-04" db="EMBL/GenBank/DDBJ databases">
        <authorList>
            <consortium name="NIH - Zebrafish Gene Collection (ZGC) project"/>
        </authorList>
    </citation>
    <scope>NUCLEOTIDE SEQUENCE [LARGE SCALE MRNA]</scope>
</reference>
<dbReference type="EMBL" id="BC163291">
    <property type="protein sequence ID" value="AAI63291.1"/>
    <property type="molecule type" value="mRNA"/>
</dbReference>
<dbReference type="RefSeq" id="NP_001124073.1">
    <property type="nucleotide sequence ID" value="NM_001130601.1"/>
</dbReference>
<dbReference type="FunCoup" id="B3DIY3">
    <property type="interactions" value="1257"/>
</dbReference>
<dbReference type="STRING" id="7955.ENSDARP00000155250"/>
<dbReference type="PaxDb" id="7955-ENSDARP00000115566"/>
<dbReference type="PeptideAtlas" id="B3DIY3"/>
<dbReference type="GeneID" id="563411"/>
<dbReference type="KEGG" id="dre:563411"/>
<dbReference type="AGR" id="ZFIN:ZDB-GENE-030131-3869"/>
<dbReference type="CTD" id="253714"/>
<dbReference type="ZFIN" id="ZDB-GENE-030131-3869">
    <property type="gene designation" value="mms22l"/>
</dbReference>
<dbReference type="eggNOG" id="ENOG502QQCR">
    <property type="taxonomic scope" value="Eukaryota"/>
</dbReference>
<dbReference type="InParanoid" id="B3DIY3"/>
<dbReference type="OrthoDB" id="8193282at2759"/>
<dbReference type="PhylomeDB" id="B3DIY3"/>
<dbReference type="PRO" id="PR:B3DIY3"/>
<dbReference type="Proteomes" id="UP000000437">
    <property type="component" value="Chromosome 16"/>
</dbReference>
<dbReference type="GO" id="GO:0043596">
    <property type="term" value="C:nuclear replication fork"/>
    <property type="evidence" value="ECO:0000250"/>
    <property type="project" value="UniProtKB"/>
</dbReference>
<dbReference type="GO" id="GO:0090734">
    <property type="term" value="C:site of DNA damage"/>
    <property type="evidence" value="ECO:0000250"/>
    <property type="project" value="UniProtKB"/>
</dbReference>
<dbReference type="GO" id="GO:0003697">
    <property type="term" value="F:single-stranded DNA binding"/>
    <property type="evidence" value="ECO:0000250"/>
    <property type="project" value="UniProtKB"/>
</dbReference>
<dbReference type="GO" id="GO:0006325">
    <property type="term" value="P:chromatin organization"/>
    <property type="evidence" value="ECO:0007669"/>
    <property type="project" value="UniProtKB-KW"/>
</dbReference>
<dbReference type="GO" id="GO:0000724">
    <property type="term" value="P:double-strand break repair via homologous recombination"/>
    <property type="evidence" value="ECO:0000250"/>
    <property type="project" value="UniProtKB"/>
</dbReference>
<dbReference type="GO" id="GO:0031297">
    <property type="term" value="P:replication fork processing"/>
    <property type="evidence" value="ECO:0000250"/>
    <property type="project" value="UniProtKB"/>
</dbReference>
<dbReference type="InterPro" id="IPR016024">
    <property type="entry name" value="ARM-type_fold"/>
</dbReference>
<dbReference type="InterPro" id="IPR042320">
    <property type="entry name" value="MMS22-like"/>
</dbReference>
<dbReference type="InterPro" id="IPR029424">
    <property type="entry name" value="MMS22L_C"/>
</dbReference>
<dbReference type="InterPro" id="IPR029425">
    <property type="entry name" value="MMS22L_N"/>
</dbReference>
<dbReference type="PANTHER" id="PTHR28547">
    <property type="entry name" value="PROTEIN MMS22-LIKE"/>
    <property type="match status" value="1"/>
</dbReference>
<dbReference type="PANTHER" id="PTHR28547:SF1">
    <property type="entry name" value="PROTEIN MMS22-LIKE"/>
    <property type="match status" value="1"/>
</dbReference>
<dbReference type="Pfam" id="PF14911">
    <property type="entry name" value="MMS22L_C"/>
    <property type="match status" value="1"/>
</dbReference>
<dbReference type="Pfam" id="PF14910">
    <property type="entry name" value="MMS22L_N"/>
    <property type="match status" value="1"/>
</dbReference>
<dbReference type="SUPFAM" id="SSF48371">
    <property type="entry name" value="ARM repeat"/>
    <property type="match status" value="1"/>
</dbReference>
<comment type="function">
    <text evidence="1">Component of the MMS22L-TONSL complex, a complex that promotes homologous recombination-mediated repair of double-strand breaks (DSBs) at stalled or collapsed replication forks. The MMS22L-TONSL complex is required to maintain genome integrity during DNA replication. It mediates the assembly of RAD51 filaments on single-stranded DNA (ssDNA): the MMS22L-TONSL complex is recruited to DSBs following histone replacement by histone chaperones and eviction of the replication protein A complex (RPA/RP-A) from DSBs. Following recruitment to DSBs, the TONSL-MMS22L complex promotes recruitment of RAD51 filaments and subsequent homologous recombination. Within the complex, MMS22L acts by binding ssDNA.</text>
</comment>
<comment type="subunit">
    <text evidence="1">Component of the MMS22L-TONSL complex.</text>
</comment>
<comment type="subcellular location">
    <subcellularLocation>
        <location evidence="1">Nucleus</location>
    </subcellularLocation>
    <subcellularLocation>
        <location evidence="1">Chromosome</location>
    </subcellularLocation>
    <text evidence="1">Localizes to DNA damage sites, accumulates at stressed replication forks.</text>
</comment>
<comment type="similarity">
    <text evidence="3">Belongs to the MMS22 family. MMS22L subfamily.</text>
</comment>
<proteinExistence type="evidence at transcript level"/>
<evidence type="ECO:0000250" key="1">
    <source>
        <dbReference type="UniProtKB" id="Q6ZRQ5"/>
    </source>
</evidence>
<evidence type="ECO:0000256" key="2">
    <source>
        <dbReference type="SAM" id="MobiDB-lite"/>
    </source>
</evidence>
<evidence type="ECO:0000305" key="3"/>
<keyword id="KW-0156">Chromatin regulator</keyword>
<keyword id="KW-0158">Chromosome</keyword>
<keyword id="KW-0227">DNA damage</keyword>
<keyword id="KW-0234">DNA repair</keyword>
<keyword id="KW-0238">DNA-binding</keyword>
<keyword id="KW-0539">Nucleus</keyword>
<keyword id="KW-1185">Reference proteome</keyword>
<feature type="chain" id="PRO_0000360033" description="Protein MMS22-like">
    <location>
        <begin position="1"/>
        <end position="1240"/>
    </location>
</feature>
<feature type="region of interest" description="Disordered" evidence="2">
    <location>
        <begin position="1"/>
        <end position="26"/>
    </location>
</feature>
<feature type="compositionally biased region" description="Polar residues" evidence="2">
    <location>
        <begin position="1"/>
        <end position="11"/>
    </location>
</feature>
<protein>
    <recommendedName>
        <fullName>Protein MMS22-like</fullName>
    </recommendedName>
    <alternativeName>
        <fullName>Methyl methanesulfonate-sensitivity protein 22-like</fullName>
    </alternativeName>
</protein>
<organism>
    <name type="scientific">Danio rerio</name>
    <name type="common">Zebrafish</name>
    <name type="synonym">Brachydanio rerio</name>
    <dbReference type="NCBI Taxonomy" id="7955"/>
    <lineage>
        <taxon>Eukaryota</taxon>
        <taxon>Metazoa</taxon>
        <taxon>Chordata</taxon>
        <taxon>Craniata</taxon>
        <taxon>Vertebrata</taxon>
        <taxon>Euteleostomi</taxon>
        <taxon>Actinopterygii</taxon>
        <taxon>Neopterygii</taxon>
        <taxon>Teleostei</taxon>
        <taxon>Ostariophysi</taxon>
        <taxon>Cypriniformes</taxon>
        <taxon>Danionidae</taxon>
        <taxon>Danioninae</taxon>
        <taxon>Danio</taxon>
    </lineage>
</organism>
<accession>B3DIY3</accession>
<sequence length="1240" mass="138402">MESEFSQSLTPPVSPSALNHYGESAPSRPPCFTCAYEAGREDTGRLSSNGYISRGALKRLLLKLDPAPADFGGDTVDIFDFPWVTETALVESTKLLFGLFRQKVLKLETLVQSSSHDFGQASSLHYEAEELRQQCVLFLSYIKVFIYRFLEPSQSLDEGPVHPFKDAEAQLPSVLVEELFSITLLIGRIGNLPANVQSAFTIQHQGKLFPPSWQLLHLHLDIHWSVLEILHLLEQRMMGQVVYAHQFVNLTGETLTNISLFEDQVNNLFCDLIGLAMNKYNKVRPTETLNTHHYHCLCTKELWILLIHLLEHRSKSIHTQSFWSYINALLQTVLKGTTSGDRDPGFPVHCKDPEGFTWWLLTHLAQIGMHNRNGTAQQEKQLEDNWSFVIGLLKSICDPKKAAQEEQIRVVVHCCLSLSLMWGPNVSAVTTFWEYYSKNLNSSFTVPWLGVSGLGSICRTPLCLLQQAKSCCSPAPVGSSSHTQLYRTANSFHIFLRILALHLSQEHAGGAPWRQIKGRLYSKFHQRRMMELSDMGLLHFLLLFLVLAQCAELEDVASRACDLLAMLPTNSTPLALRALQWRGQLALVLLYLEKGLDVGALAEQLAVYFSQAAREFYLKTTEPSRKLALWAPLSSYLEGVSEVFETSPNLTLSEERLLNEGFGLLLPACRQSELSSALGFLQTVLAQLRRVHQRCGQPSHSVDSPSWAPLPSVAKERHQAVAAALWSHFFPFLCSMRLSQTPPPQLADAAAGFTLLALDMPGSAPQNLQPHPIQSIMQSFGWDEMLHPLLVTHYLNHLLQNGELVSWVSSGQGSGSAQALCVRAWIRCVLQQYLHKSPDAPDARAGRNLDEQLAELTRQVFRLPEVEFVLQRAGLQSAAVKDPKAAMAVFLKAVGRSYCELQLLSERSSAVSRALEYVGDILKYIKPYLQNKSREGLQLAYWTIGCLVKHWSHLLATSKAQQLLFRIVDVLLLPHALLQQDTAAHTQMLSALKDSLPMFLQGLSVAVSVSHSQGAYLKQQQHSVISQYLSRFLPATPSTGAVVNHPVLLAACESTPSPQGERLRKSILHVLRENFLQFKGLAPPPRLAAVLCFLLELLKRNSDRDPALLTIPLPSVLRCLMLVNEPQVKRLSSEVTQLIVERCTAAVGEQPCEHTTAILRAFVDENEGVYDQQVYNVLEVVAVLHPFTVAALIPFLTLSLRKTECKRGLGKNTSLRNGYRRLLALLGDSGQAEMISLEED</sequence>
<gene>
    <name type="primary">mms22l</name>
    <name type="ORF">zgc:194596</name>
</gene>